<protein>
    <recommendedName>
        <fullName>ATP-dependent RNA helicase DDX55</fullName>
        <ecNumber evidence="1">3.6.4.13</ecNumber>
    </recommendedName>
    <alternativeName>
        <fullName>DEAD box protein 55</fullName>
    </alternativeName>
</protein>
<organism>
    <name type="scientific">Danio rerio</name>
    <name type="common">Zebrafish</name>
    <name type="synonym">Brachydanio rerio</name>
    <dbReference type="NCBI Taxonomy" id="7955"/>
    <lineage>
        <taxon>Eukaryota</taxon>
        <taxon>Metazoa</taxon>
        <taxon>Chordata</taxon>
        <taxon>Craniata</taxon>
        <taxon>Vertebrata</taxon>
        <taxon>Euteleostomi</taxon>
        <taxon>Actinopterygii</taxon>
        <taxon>Neopterygii</taxon>
        <taxon>Teleostei</taxon>
        <taxon>Ostariophysi</taxon>
        <taxon>Cypriniformes</taxon>
        <taxon>Danionidae</taxon>
        <taxon>Danioninae</taxon>
        <taxon>Danio</taxon>
    </lineage>
</organism>
<evidence type="ECO:0000250" key="1">
    <source>
        <dbReference type="UniProtKB" id="Q8NHQ9"/>
    </source>
</evidence>
<evidence type="ECO:0000255" key="2"/>
<evidence type="ECO:0000255" key="3">
    <source>
        <dbReference type="PROSITE-ProRule" id="PRU00541"/>
    </source>
</evidence>
<evidence type="ECO:0000255" key="4">
    <source>
        <dbReference type="PROSITE-ProRule" id="PRU00542"/>
    </source>
</evidence>
<evidence type="ECO:0000256" key="5">
    <source>
        <dbReference type="SAM" id="MobiDB-lite"/>
    </source>
</evidence>
<evidence type="ECO:0000269" key="6">
    <source>
    </source>
</evidence>
<evidence type="ECO:0000305" key="7"/>
<proteinExistence type="evidence at transcript level"/>
<comment type="function">
    <text evidence="1 6">Probable ATP-binding RNA helicase. Plays an essential role in early embryonic development (PubMed:12006978). Has ATPase activity and is involved in the maturation of precursor large subunit rRNAs (By similarity).</text>
</comment>
<comment type="catalytic activity">
    <reaction evidence="1">
        <text>ATP + H2O = ADP + phosphate + H(+)</text>
        <dbReference type="Rhea" id="RHEA:13065"/>
        <dbReference type="ChEBI" id="CHEBI:15377"/>
        <dbReference type="ChEBI" id="CHEBI:15378"/>
        <dbReference type="ChEBI" id="CHEBI:30616"/>
        <dbReference type="ChEBI" id="CHEBI:43474"/>
        <dbReference type="ChEBI" id="CHEBI:456216"/>
        <dbReference type="EC" id="3.6.4.13"/>
    </reaction>
</comment>
<comment type="subunit">
    <text evidence="1">Interacts with 28S rRNA. Interacts with double-stranded RNA substrates in vitro; the interaction stimulates ATPase activity.</text>
</comment>
<comment type="subcellular location">
    <subcellularLocation>
        <location evidence="1">Nucleus</location>
        <location evidence="1">Nucleoplasm</location>
    </subcellularLocation>
</comment>
<comment type="domain">
    <text>The Q motif is unique to and characteristic of the DEAD box family of RNA helicases and controls ATP binding and hydrolysis.</text>
</comment>
<comment type="domain">
    <text evidence="1">The C-terminal region is required for DDX55 nuclear import and association with pre-ribosomal complexes.</text>
</comment>
<comment type="disruption phenotype">
    <text evidence="6">Embryos have bent ceratohyal cartilage.</text>
</comment>
<comment type="similarity">
    <text evidence="7">Belongs to the DEAD box helicase family. DDX55/SPB4 subfamily.</text>
</comment>
<feature type="chain" id="PRO_0000252213" description="ATP-dependent RNA helicase DDX55">
    <location>
        <begin position="1"/>
        <end position="593"/>
    </location>
</feature>
<feature type="domain" description="Helicase ATP-binding" evidence="3">
    <location>
        <begin position="40"/>
        <end position="223"/>
    </location>
</feature>
<feature type="domain" description="Helicase C-terminal" evidence="4">
    <location>
        <begin position="241"/>
        <end position="405"/>
    </location>
</feature>
<feature type="region of interest" description="Disordered" evidence="5">
    <location>
        <begin position="524"/>
        <end position="545"/>
    </location>
</feature>
<feature type="region of interest" description="Important for nuclear localization" evidence="1">
    <location>
        <begin position="531"/>
        <end position="560"/>
    </location>
</feature>
<feature type="region of interest" description="Disordered" evidence="5">
    <location>
        <begin position="569"/>
        <end position="593"/>
    </location>
</feature>
<feature type="coiled-coil region" evidence="2">
    <location>
        <begin position="535"/>
        <end position="565"/>
    </location>
</feature>
<feature type="short sequence motif" description="Q motif">
    <location>
        <begin position="9"/>
        <end position="37"/>
    </location>
</feature>
<feature type="short sequence motif" description="DEAD box">
    <location>
        <begin position="171"/>
        <end position="174"/>
    </location>
</feature>
<feature type="compositionally biased region" description="Basic residues" evidence="5">
    <location>
        <begin position="524"/>
        <end position="535"/>
    </location>
</feature>
<feature type="binding site" evidence="3">
    <location>
        <begin position="53"/>
        <end position="60"/>
    </location>
    <ligand>
        <name>ATP</name>
        <dbReference type="ChEBI" id="CHEBI:30616"/>
    </ligand>
</feature>
<feature type="sequence conflict" description="In Ref. 1; AAM34647." evidence="7" ref="1">
    <original>K</original>
    <variation>G</variation>
    <location>
        <position position="8"/>
    </location>
</feature>
<feature type="sequence conflict" description="In Ref. 2; AAH59534." evidence="7" ref="2">
    <original>A</original>
    <variation>S</variation>
    <location>
        <position position="409"/>
    </location>
</feature>
<keyword id="KW-0067">ATP-binding</keyword>
<keyword id="KW-0175">Coiled coil</keyword>
<keyword id="KW-0217">Developmental protein</keyword>
<keyword id="KW-0347">Helicase</keyword>
<keyword id="KW-0378">Hydrolase</keyword>
<keyword id="KW-0547">Nucleotide-binding</keyword>
<keyword id="KW-0539">Nucleus</keyword>
<keyword id="KW-1185">Reference proteome</keyword>
<keyword id="KW-0690">Ribosome biogenesis</keyword>
<keyword id="KW-0694">RNA-binding</keyword>
<keyword id="KW-0698">rRNA processing</keyword>
<keyword id="KW-0699">rRNA-binding</keyword>
<dbReference type="EC" id="3.6.4.13" evidence="1"/>
<dbReference type="EMBL" id="AF506203">
    <property type="protein sequence ID" value="AAM34647.1"/>
    <property type="molecule type" value="mRNA"/>
</dbReference>
<dbReference type="EMBL" id="BC059534">
    <property type="protein sequence ID" value="AAH59534.1"/>
    <property type="status" value="ALT_TERM"/>
    <property type="molecule type" value="mRNA"/>
</dbReference>
<dbReference type="SMR" id="Q8JHJ2"/>
<dbReference type="FunCoup" id="Q8JHJ2">
    <property type="interactions" value="2625"/>
</dbReference>
<dbReference type="STRING" id="7955.ENSDARP00000020323"/>
<dbReference type="PaxDb" id="7955-ENSDARP00000020323"/>
<dbReference type="AGR" id="ZFIN:ZDB-GENE-021212-1"/>
<dbReference type="ZFIN" id="ZDB-GENE-021212-1">
    <property type="gene designation" value="ddx55"/>
</dbReference>
<dbReference type="eggNOG" id="KOG0345">
    <property type="taxonomic scope" value="Eukaryota"/>
</dbReference>
<dbReference type="InParanoid" id="Q8JHJ2"/>
<dbReference type="PhylomeDB" id="Q8JHJ2"/>
<dbReference type="PRO" id="PR:Q8JHJ2"/>
<dbReference type="Proteomes" id="UP000000437">
    <property type="component" value="Unplaced"/>
</dbReference>
<dbReference type="GO" id="GO:0005730">
    <property type="term" value="C:nucleolus"/>
    <property type="evidence" value="ECO:0000318"/>
    <property type="project" value="GO_Central"/>
</dbReference>
<dbReference type="GO" id="GO:0005524">
    <property type="term" value="F:ATP binding"/>
    <property type="evidence" value="ECO:0007669"/>
    <property type="project" value="UniProtKB-KW"/>
</dbReference>
<dbReference type="GO" id="GO:0016887">
    <property type="term" value="F:ATP hydrolysis activity"/>
    <property type="evidence" value="ECO:0007669"/>
    <property type="project" value="RHEA"/>
</dbReference>
<dbReference type="GO" id="GO:0003723">
    <property type="term" value="F:RNA binding"/>
    <property type="evidence" value="ECO:0007669"/>
    <property type="project" value="UniProtKB-KW"/>
</dbReference>
<dbReference type="GO" id="GO:0003724">
    <property type="term" value="F:RNA helicase activity"/>
    <property type="evidence" value="ECO:0007669"/>
    <property type="project" value="UniProtKB-EC"/>
</dbReference>
<dbReference type="CDD" id="cd17960">
    <property type="entry name" value="DEADc_DDX55"/>
    <property type="match status" value="1"/>
</dbReference>
<dbReference type="CDD" id="cd18787">
    <property type="entry name" value="SF2_C_DEAD"/>
    <property type="match status" value="1"/>
</dbReference>
<dbReference type="FunFam" id="3.40.50.300:FF:000877">
    <property type="entry name" value="RNA helicase"/>
    <property type="match status" value="1"/>
</dbReference>
<dbReference type="FunFam" id="3.40.50.300:FF:001022">
    <property type="entry name" value="RNA helicase"/>
    <property type="match status" value="1"/>
</dbReference>
<dbReference type="Gene3D" id="3.40.50.300">
    <property type="entry name" value="P-loop containing nucleotide triphosphate hydrolases"/>
    <property type="match status" value="2"/>
</dbReference>
<dbReference type="InterPro" id="IPR011545">
    <property type="entry name" value="DEAD/DEAH_box_helicase_dom"/>
</dbReference>
<dbReference type="InterPro" id="IPR014001">
    <property type="entry name" value="Helicase_ATP-bd"/>
</dbReference>
<dbReference type="InterPro" id="IPR001650">
    <property type="entry name" value="Helicase_C-like"/>
</dbReference>
<dbReference type="InterPro" id="IPR027417">
    <property type="entry name" value="P-loop_NTPase"/>
</dbReference>
<dbReference type="InterPro" id="IPR000629">
    <property type="entry name" value="RNA-helicase_DEAD-box_CS"/>
</dbReference>
<dbReference type="InterPro" id="IPR014014">
    <property type="entry name" value="RNA_helicase_DEAD_Q_motif"/>
</dbReference>
<dbReference type="InterPro" id="IPR025313">
    <property type="entry name" value="SPB4-like_CTE"/>
</dbReference>
<dbReference type="PANTHER" id="PTHR24031">
    <property type="entry name" value="RNA HELICASE"/>
    <property type="match status" value="1"/>
</dbReference>
<dbReference type="Pfam" id="PF13959">
    <property type="entry name" value="CTE_SPB4"/>
    <property type="match status" value="1"/>
</dbReference>
<dbReference type="Pfam" id="PF00270">
    <property type="entry name" value="DEAD"/>
    <property type="match status" value="1"/>
</dbReference>
<dbReference type="Pfam" id="PF00271">
    <property type="entry name" value="Helicase_C"/>
    <property type="match status" value="1"/>
</dbReference>
<dbReference type="SMART" id="SM00487">
    <property type="entry name" value="DEXDc"/>
    <property type="match status" value="1"/>
</dbReference>
<dbReference type="SMART" id="SM01178">
    <property type="entry name" value="DUF4217"/>
    <property type="match status" value="1"/>
</dbReference>
<dbReference type="SMART" id="SM00490">
    <property type="entry name" value="HELICc"/>
    <property type="match status" value="1"/>
</dbReference>
<dbReference type="SUPFAM" id="SSF52540">
    <property type="entry name" value="P-loop containing nucleoside triphosphate hydrolases"/>
    <property type="match status" value="1"/>
</dbReference>
<dbReference type="PROSITE" id="PS00039">
    <property type="entry name" value="DEAD_ATP_HELICASE"/>
    <property type="match status" value="1"/>
</dbReference>
<dbReference type="PROSITE" id="PS51192">
    <property type="entry name" value="HELICASE_ATP_BIND_1"/>
    <property type="match status" value="1"/>
</dbReference>
<dbReference type="PROSITE" id="PS51194">
    <property type="entry name" value="HELICASE_CTER"/>
    <property type="match status" value="1"/>
</dbReference>
<dbReference type="PROSITE" id="PS51195">
    <property type="entry name" value="Q_MOTIF"/>
    <property type="match status" value="1"/>
</dbReference>
<name>DDX55_DANRE</name>
<reference key="1">
    <citation type="journal article" date="2002" name="Nat. Genet.">
        <title>Insertional mutagenesis in zebrafish rapidly identifies genes essential for early vertebrate development.</title>
        <authorList>
            <person name="Golling G."/>
            <person name="Amsterdam A."/>
            <person name="Sun Z."/>
            <person name="Antonelli M."/>
            <person name="Maldonado E."/>
            <person name="Chen W."/>
            <person name="Burgess S."/>
            <person name="Haldi M."/>
            <person name="Artzt K."/>
            <person name="Farrington S."/>
            <person name="Lin S.-Y."/>
            <person name="Nissen R.M."/>
            <person name="Hopkins N."/>
        </authorList>
    </citation>
    <scope>NUCLEOTIDE SEQUENCE [LARGE SCALE MRNA]</scope>
    <scope>FUNCTION</scope>
    <scope>DISRUPTION PHENOTYPE</scope>
    <source>
        <tissue>Embryo</tissue>
    </source>
</reference>
<reference key="2">
    <citation type="submission" date="2003-10" db="EMBL/GenBank/DDBJ databases">
        <authorList>
            <consortium name="NIH - Zebrafish Gene Collection (ZGC) project"/>
        </authorList>
    </citation>
    <scope>NUCLEOTIDE SEQUENCE [LARGE SCALE MRNA] OF 1-489</scope>
    <source>
        <tissue>Retina</tissue>
    </source>
</reference>
<gene>
    <name type="primary">ddx55</name>
</gene>
<sequence length="593" mass="66911">MENITDGKWGSLPVKLHDNILQTLKELGFTYMTPVQSACIPLFMSNKDVAAEAVTGSGKTLAFVIPALEILLKREEKLKKMQVGALIITPTRELAMQISEVMGRFLQGFPQFTQILLIGGSNPIEDVEKLKTQGANIIIATPGRLEDMFRRKADGLDLATAVKSLDVLVLDEADRLLDMGFEASLNTILGYLPKQRRTGLFSATQTQELEKLVRAGLRNPVRITVKEKGVAASSVQKTPAKLSNYYTMCRAEEKFNTLVAFLRQHKHEKQLVFFSTCACVEYFGKALEVLVKNVSIHCIHGKMKHKRNKIFADFRALKSGILVCTDVMARGIDIPEVNWVLQYDPPSSASSFVHRCGRTARIGNQGNALVFLLPMEESYVNFLSINQKCPLQSFSSVKDVVDVLPKLKAMALGDRAMFEKGMRAFVSYVQAYAKHECSLIFRIKDLDFAALARGFALLRLPKMPELRGKTFPDFKAEAIDTDTIRFKDKNREKQRQKWLAEQKEKEVPLRKNFIKNKAWSKQKIKKDRKKKRLPKAKLDQDSDAAEEDLNELMNDTRLLKKLKKGKITEEDFDKQMSSTDKHKPAGIDSSDGD</sequence>
<accession>Q8JHJ2</accession>
<accession>Q6PBZ0</accession>